<comment type="function">
    <text evidence="1">Catalyzes the addition and repair of the essential 3'-terminal CCA sequence in tRNAs without using a nucleic acid template. Adds these three nucleotides in the order of C, C, and A to the tRNA nucleotide-73, using CTP and ATP as substrates and producing inorganic pyrophosphate. tRNA 3'-terminal CCA addition is required both for tRNA processing and repair. Also involved in tRNA surveillance by mediating tandem CCA addition to generate a CCACCA at the 3' terminus of unstable tRNAs. While stable tRNAs receive only 3'-terminal CCA, unstable tRNAs are marked with CCACCA and rapidly degraded.</text>
</comment>
<comment type="catalytic activity">
    <reaction evidence="1">
        <text>a tRNA precursor + 2 CTP + ATP = a tRNA with a 3' CCA end + 3 diphosphate</text>
        <dbReference type="Rhea" id="RHEA:14433"/>
        <dbReference type="Rhea" id="RHEA-COMP:10465"/>
        <dbReference type="Rhea" id="RHEA-COMP:10468"/>
        <dbReference type="ChEBI" id="CHEBI:30616"/>
        <dbReference type="ChEBI" id="CHEBI:33019"/>
        <dbReference type="ChEBI" id="CHEBI:37563"/>
        <dbReference type="ChEBI" id="CHEBI:74896"/>
        <dbReference type="ChEBI" id="CHEBI:83071"/>
        <dbReference type="EC" id="2.7.7.72"/>
    </reaction>
</comment>
<comment type="catalytic activity">
    <reaction evidence="1">
        <text>a tRNA with a 3' CCA end + 2 CTP + ATP = a tRNA with a 3' CCACCA end + 3 diphosphate</text>
        <dbReference type="Rhea" id="RHEA:76235"/>
        <dbReference type="Rhea" id="RHEA-COMP:10468"/>
        <dbReference type="Rhea" id="RHEA-COMP:18655"/>
        <dbReference type="ChEBI" id="CHEBI:30616"/>
        <dbReference type="ChEBI" id="CHEBI:33019"/>
        <dbReference type="ChEBI" id="CHEBI:37563"/>
        <dbReference type="ChEBI" id="CHEBI:83071"/>
        <dbReference type="ChEBI" id="CHEBI:195187"/>
    </reaction>
    <physiologicalReaction direction="left-to-right" evidence="1">
        <dbReference type="Rhea" id="RHEA:76236"/>
    </physiologicalReaction>
</comment>
<comment type="cofactor">
    <cofactor evidence="1">
        <name>Mg(2+)</name>
        <dbReference type="ChEBI" id="CHEBI:18420"/>
    </cofactor>
</comment>
<comment type="subunit">
    <text evidence="1">Homodimer.</text>
</comment>
<comment type="miscellaneous">
    <text evidence="1">A single active site specifically recognizes both ATP and CTP and is responsible for their addition.</text>
</comment>
<comment type="similarity">
    <text evidence="1">Belongs to the tRNA nucleotidyltransferase/poly(A) polymerase family. Bacterial CCA-adding enzyme type 3 subfamily.</text>
</comment>
<accession>A9VME7</accession>
<keyword id="KW-0067">ATP-binding</keyword>
<keyword id="KW-0460">Magnesium</keyword>
<keyword id="KW-0479">Metal-binding</keyword>
<keyword id="KW-0547">Nucleotide-binding</keyword>
<keyword id="KW-0548">Nucleotidyltransferase</keyword>
<keyword id="KW-0692">RNA repair</keyword>
<keyword id="KW-0694">RNA-binding</keyword>
<keyword id="KW-0808">Transferase</keyword>
<keyword id="KW-0819">tRNA processing</keyword>
<dbReference type="EC" id="2.7.7.72" evidence="1"/>
<dbReference type="EMBL" id="CP000903">
    <property type="protein sequence ID" value="ABY42709.1"/>
    <property type="molecule type" value="Genomic_DNA"/>
</dbReference>
<dbReference type="RefSeq" id="WP_002086595.1">
    <property type="nucleotide sequence ID" value="NC_010184.1"/>
</dbReference>
<dbReference type="SMR" id="A9VME7"/>
<dbReference type="KEGG" id="bwe:BcerKBAB4_1462"/>
<dbReference type="eggNOG" id="COG0617">
    <property type="taxonomic scope" value="Bacteria"/>
</dbReference>
<dbReference type="HOGENOM" id="CLU_015961_3_0_9"/>
<dbReference type="Proteomes" id="UP000002154">
    <property type="component" value="Chromosome"/>
</dbReference>
<dbReference type="GO" id="GO:0005524">
    <property type="term" value="F:ATP binding"/>
    <property type="evidence" value="ECO:0007669"/>
    <property type="project" value="UniProtKB-UniRule"/>
</dbReference>
<dbReference type="GO" id="GO:0004810">
    <property type="term" value="F:CCA tRNA nucleotidyltransferase activity"/>
    <property type="evidence" value="ECO:0007669"/>
    <property type="project" value="UniProtKB-UniRule"/>
</dbReference>
<dbReference type="GO" id="GO:0000287">
    <property type="term" value="F:magnesium ion binding"/>
    <property type="evidence" value="ECO:0007669"/>
    <property type="project" value="UniProtKB-UniRule"/>
</dbReference>
<dbReference type="GO" id="GO:0000049">
    <property type="term" value="F:tRNA binding"/>
    <property type="evidence" value="ECO:0007669"/>
    <property type="project" value="UniProtKB-UniRule"/>
</dbReference>
<dbReference type="GO" id="GO:0042245">
    <property type="term" value="P:RNA repair"/>
    <property type="evidence" value="ECO:0007669"/>
    <property type="project" value="UniProtKB-KW"/>
</dbReference>
<dbReference type="GO" id="GO:0001680">
    <property type="term" value="P:tRNA 3'-terminal CCA addition"/>
    <property type="evidence" value="ECO:0007669"/>
    <property type="project" value="UniProtKB-UniRule"/>
</dbReference>
<dbReference type="CDD" id="cd05398">
    <property type="entry name" value="NT_ClassII-CCAase"/>
    <property type="match status" value="1"/>
</dbReference>
<dbReference type="Gene3D" id="1.10.110.30">
    <property type="match status" value="1"/>
</dbReference>
<dbReference type="Gene3D" id="1.10.246.80">
    <property type="match status" value="1"/>
</dbReference>
<dbReference type="Gene3D" id="1.20.58.560">
    <property type="match status" value="1"/>
</dbReference>
<dbReference type="Gene3D" id="3.30.460.10">
    <property type="entry name" value="Beta Polymerase, domain 2"/>
    <property type="match status" value="1"/>
</dbReference>
<dbReference type="HAMAP" id="MF_01263">
    <property type="entry name" value="CCA_bact_type3"/>
    <property type="match status" value="1"/>
</dbReference>
<dbReference type="InterPro" id="IPR050264">
    <property type="entry name" value="Bact_CCA-adding_enz_type3_sf"/>
</dbReference>
<dbReference type="InterPro" id="IPR032810">
    <property type="entry name" value="CCA-adding_enz_C"/>
</dbReference>
<dbReference type="InterPro" id="IPR023068">
    <property type="entry name" value="CCA-adding_enz_firmicutes"/>
</dbReference>
<dbReference type="InterPro" id="IPR043519">
    <property type="entry name" value="NT_sf"/>
</dbReference>
<dbReference type="InterPro" id="IPR002646">
    <property type="entry name" value="PolA_pol_head_dom"/>
</dbReference>
<dbReference type="InterPro" id="IPR032828">
    <property type="entry name" value="PolyA_RNA-bd"/>
</dbReference>
<dbReference type="NCBIfam" id="NF009814">
    <property type="entry name" value="PRK13299.1"/>
    <property type="match status" value="1"/>
</dbReference>
<dbReference type="PANTHER" id="PTHR46173">
    <property type="entry name" value="CCA TRNA NUCLEOTIDYLTRANSFERASE 1, MITOCHONDRIAL"/>
    <property type="match status" value="1"/>
</dbReference>
<dbReference type="PANTHER" id="PTHR46173:SF1">
    <property type="entry name" value="CCA TRNA NUCLEOTIDYLTRANSFERASE 1, MITOCHONDRIAL"/>
    <property type="match status" value="1"/>
</dbReference>
<dbReference type="Pfam" id="PF01743">
    <property type="entry name" value="PolyA_pol"/>
    <property type="match status" value="1"/>
</dbReference>
<dbReference type="Pfam" id="PF12627">
    <property type="entry name" value="PolyA_pol_RNAbd"/>
    <property type="match status" value="1"/>
</dbReference>
<dbReference type="Pfam" id="PF13735">
    <property type="entry name" value="tRNA_NucTran2_2"/>
    <property type="match status" value="1"/>
</dbReference>
<dbReference type="SUPFAM" id="SSF81301">
    <property type="entry name" value="Nucleotidyltransferase"/>
    <property type="match status" value="1"/>
</dbReference>
<dbReference type="SUPFAM" id="SSF81891">
    <property type="entry name" value="Poly A polymerase C-terminal region-like"/>
    <property type="match status" value="1"/>
</dbReference>
<reference key="1">
    <citation type="journal article" date="2008" name="Chem. Biol. Interact.">
        <title>Extending the Bacillus cereus group genomics to putative food-borne pathogens of different toxicity.</title>
        <authorList>
            <person name="Lapidus A."/>
            <person name="Goltsman E."/>
            <person name="Auger S."/>
            <person name="Galleron N."/>
            <person name="Segurens B."/>
            <person name="Dossat C."/>
            <person name="Land M.L."/>
            <person name="Broussolle V."/>
            <person name="Brillard J."/>
            <person name="Guinebretiere M.-H."/>
            <person name="Sanchis V."/>
            <person name="Nguen-the C."/>
            <person name="Lereclus D."/>
            <person name="Richardson P."/>
            <person name="Wincker P."/>
            <person name="Weissenbach J."/>
            <person name="Ehrlich S.D."/>
            <person name="Sorokin A."/>
        </authorList>
    </citation>
    <scope>NUCLEOTIDE SEQUENCE [LARGE SCALE GENOMIC DNA]</scope>
    <source>
        <strain>KBAB4</strain>
    </source>
</reference>
<name>CCA_BACMK</name>
<organism>
    <name type="scientific">Bacillus mycoides (strain KBAB4)</name>
    <name type="common">Bacillus weihenstephanensis</name>
    <dbReference type="NCBI Taxonomy" id="315730"/>
    <lineage>
        <taxon>Bacteria</taxon>
        <taxon>Bacillati</taxon>
        <taxon>Bacillota</taxon>
        <taxon>Bacilli</taxon>
        <taxon>Bacillales</taxon>
        <taxon>Bacillaceae</taxon>
        <taxon>Bacillus</taxon>
        <taxon>Bacillus cereus group</taxon>
    </lineage>
</organism>
<feature type="chain" id="PRO_1000140072" description="CCA-adding enzyme">
    <location>
        <begin position="1"/>
        <end position="397"/>
    </location>
</feature>
<feature type="binding site" evidence="1">
    <location>
        <position position="26"/>
    </location>
    <ligand>
        <name>ATP</name>
        <dbReference type="ChEBI" id="CHEBI:30616"/>
    </ligand>
</feature>
<feature type="binding site" evidence="1">
    <location>
        <position position="26"/>
    </location>
    <ligand>
        <name>CTP</name>
        <dbReference type="ChEBI" id="CHEBI:37563"/>
    </ligand>
</feature>
<feature type="binding site" evidence="1">
    <location>
        <position position="29"/>
    </location>
    <ligand>
        <name>ATP</name>
        <dbReference type="ChEBI" id="CHEBI:30616"/>
    </ligand>
</feature>
<feature type="binding site" evidence="1">
    <location>
        <position position="29"/>
    </location>
    <ligand>
        <name>CTP</name>
        <dbReference type="ChEBI" id="CHEBI:37563"/>
    </ligand>
</feature>
<feature type="binding site" evidence="1">
    <location>
        <position position="39"/>
    </location>
    <ligand>
        <name>Mg(2+)</name>
        <dbReference type="ChEBI" id="CHEBI:18420"/>
    </ligand>
</feature>
<feature type="binding site" evidence="1">
    <location>
        <position position="41"/>
    </location>
    <ligand>
        <name>Mg(2+)</name>
        <dbReference type="ChEBI" id="CHEBI:18420"/>
    </ligand>
</feature>
<feature type="binding site" evidence="1">
    <location>
        <position position="110"/>
    </location>
    <ligand>
        <name>ATP</name>
        <dbReference type="ChEBI" id="CHEBI:30616"/>
    </ligand>
</feature>
<feature type="binding site" evidence="1">
    <location>
        <position position="110"/>
    </location>
    <ligand>
        <name>CTP</name>
        <dbReference type="ChEBI" id="CHEBI:37563"/>
    </ligand>
</feature>
<feature type="binding site" evidence="1">
    <location>
        <position position="153"/>
    </location>
    <ligand>
        <name>ATP</name>
        <dbReference type="ChEBI" id="CHEBI:30616"/>
    </ligand>
</feature>
<feature type="binding site" evidence="1">
    <location>
        <position position="153"/>
    </location>
    <ligand>
        <name>CTP</name>
        <dbReference type="ChEBI" id="CHEBI:37563"/>
    </ligand>
</feature>
<feature type="binding site" evidence="1">
    <location>
        <position position="156"/>
    </location>
    <ligand>
        <name>ATP</name>
        <dbReference type="ChEBI" id="CHEBI:30616"/>
    </ligand>
</feature>
<feature type="binding site" evidence="1">
    <location>
        <position position="156"/>
    </location>
    <ligand>
        <name>CTP</name>
        <dbReference type="ChEBI" id="CHEBI:37563"/>
    </ligand>
</feature>
<feature type="binding site" evidence="1">
    <location>
        <position position="159"/>
    </location>
    <ligand>
        <name>ATP</name>
        <dbReference type="ChEBI" id="CHEBI:30616"/>
    </ligand>
</feature>
<feature type="binding site" evidence="1">
    <location>
        <position position="159"/>
    </location>
    <ligand>
        <name>CTP</name>
        <dbReference type="ChEBI" id="CHEBI:37563"/>
    </ligand>
</feature>
<feature type="binding site" evidence="1">
    <location>
        <position position="162"/>
    </location>
    <ligand>
        <name>ATP</name>
        <dbReference type="ChEBI" id="CHEBI:30616"/>
    </ligand>
</feature>
<feature type="binding site" evidence="1">
    <location>
        <position position="162"/>
    </location>
    <ligand>
        <name>CTP</name>
        <dbReference type="ChEBI" id="CHEBI:37563"/>
    </ligand>
</feature>
<protein>
    <recommendedName>
        <fullName evidence="1">CCA-adding enzyme</fullName>
        <ecNumber evidence="1">2.7.7.72</ecNumber>
    </recommendedName>
    <alternativeName>
        <fullName evidence="1">CCA tRNA nucleotidyltransferase</fullName>
    </alternativeName>
    <alternativeName>
        <fullName evidence="1">tRNA CCA-pyrophosphorylase</fullName>
    </alternativeName>
    <alternativeName>
        <fullName evidence="1">tRNA adenylyl-/cytidylyl- transferase</fullName>
    </alternativeName>
    <alternativeName>
        <fullName evidence="1">tRNA nucleotidyltransferase</fullName>
    </alternativeName>
    <alternativeName>
        <fullName evidence="1">tRNA-NT</fullName>
    </alternativeName>
</protein>
<gene>
    <name evidence="1" type="primary">cca</name>
    <name type="ordered locus">BcerKBAB4_1462</name>
</gene>
<sequence>MERFKKASSIIEMLKQHGHEAYFVGGSVRDLIIDRPIGDIDIATSALPEEVMAIFPRHVPVGLEHGTVIVVENGEPYEVTTFRTESEYEDFRRPSSVQFVRSLEEDLKRRDFTMNAIAMTEEGEMVDLFAGKEAIRLKEITTVGDAADRFQEDALRMMRGIRFVSTLGFSLEIKTKQAIETYGHLLEHIAIERITVEFEKLLTGTYCVNGLQELVETKLFSHLPYLQMSEERLLKATQYKWDSFETDVEAWAFFLYCIGEEHPSVFLRQWKFSNKKIKDIVAVLLAIRSRKEKEWDTILLYKTGIRIAEMAERVYEAIIESYNSASVKQVQSLFHALPIKNRQEMNVTGNDLLSWTDKKPGPWVAEMLQNIEEAIVQGDLVNKKEDIREWLQRCNLL</sequence>
<evidence type="ECO:0000255" key="1">
    <source>
        <dbReference type="HAMAP-Rule" id="MF_01263"/>
    </source>
</evidence>
<proteinExistence type="inferred from homology"/>